<organism>
    <name type="scientific">Bombyx mori nuclear polyhedrosis virus</name>
    <name type="common">BmNPV</name>
    <dbReference type="NCBI Taxonomy" id="271108"/>
    <lineage>
        <taxon>Viruses</taxon>
        <taxon>Viruses incertae sedis</taxon>
        <taxon>Naldaviricetes</taxon>
        <taxon>Lefavirales</taxon>
        <taxon>Baculoviridae</taxon>
        <taxon>Alphabaculovirus</taxon>
        <taxon>Alphabaculovirus bomori</taxon>
    </lineage>
</organism>
<comment type="function">
    <text evidence="2">Plays a role in the proper expression of late and very late genes.</text>
</comment>
<comment type="subcellular location">
    <subcellularLocation>
        <location evidence="2">Host nucleus</location>
    </subcellularLocation>
</comment>
<protein>
    <recommendedName>
        <fullName>Zinc finger protein CG30</fullName>
    </recommendedName>
</protein>
<sequence>MEFVKLQCNICFSVAEIKNYFMQPIDRLTMIPVLELDTCKHQLCSMCIRKIRKRKKTPCPLCRVESLHFNVYSINRNVVDVIKCSVTSVAQWNKINGNFDAASLASVLFEKSLLDDAEDSNNAANSDDTMLSESQAILKKLQADIAEQTQLNIKRQLDLNKLQQTSVFMQEKLHRIKNDYNNMHKSFKELQLKRISTEKALKSLNDDYAKLAAKNARLSNENKVLSNKNIELIKHKNLLQNEYTTLQSYKCITNSTITTNVTINVD</sequence>
<keyword id="KW-1048">Host nucleus</keyword>
<keyword id="KW-0479">Metal-binding</keyword>
<keyword id="KW-0862">Zinc</keyword>
<keyword id="KW-0863">Zinc-finger</keyword>
<name>CG30_NPVBM</name>
<accession>Q90173</accession>
<evidence type="ECO:0000255" key="1">
    <source>
        <dbReference type="PROSITE-ProRule" id="PRU00175"/>
    </source>
</evidence>
<evidence type="ECO:0000269" key="2">
    <source>
    </source>
</evidence>
<feature type="chain" id="PRO_0000056346" description="Zinc finger protein CG30">
    <location>
        <begin position="1"/>
        <end position="266"/>
    </location>
</feature>
<feature type="zinc finger region" description="RING-type" evidence="1">
    <location>
        <begin position="8"/>
        <end position="63"/>
    </location>
</feature>
<gene>
    <name type="primary">CG30</name>
    <name type="synonym">BP30</name>
</gene>
<organismHost>
    <name type="scientific">Bombyx mori</name>
    <name type="common">Silk moth</name>
    <dbReference type="NCBI Taxonomy" id="7091"/>
</organismHost>
<proteinExistence type="predicted"/>
<reference key="1">
    <citation type="journal article" date="1996" name="J. Gen. Virol.">
        <title>The genes encoding the P39 and CG30 proteins of Bombyx mori nuclear polyhedrosis virus.</title>
        <authorList>
            <person name="Lu M."/>
            <person name="Iatrou K."/>
        </authorList>
    </citation>
    <scope>NUCLEOTIDE SEQUENCE [GENOMIC DNA]</scope>
</reference>
<reference key="2">
    <citation type="journal article" date="2013" name="Virus Res.">
        <title>Functional characterization of Bombyx mori nucleopolyhedrovirus CG30 protein.</title>
        <authorList>
            <person name="Ishihara G."/>
            <person name="Shimada T."/>
            <person name="Katsuma S."/>
        </authorList>
    </citation>
    <scope>FUNCTION</scope>
    <scope>SUBCELLULAR LOCATION</scope>
</reference>
<dbReference type="EMBL" id="U50905">
    <property type="protein sequence ID" value="AAB50033.1"/>
    <property type="molecule type" value="Genomic_DNA"/>
</dbReference>
<dbReference type="SMR" id="Q90173"/>
<dbReference type="GO" id="GO:0042025">
    <property type="term" value="C:host cell nucleus"/>
    <property type="evidence" value="ECO:0007669"/>
    <property type="project" value="UniProtKB-SubCell"/>
</dbReference>
<dbReference type="GO" id="GO:0008270">
    <property type="term" value="F:zinc ion binding"/>
    <property type="evidence" value="ECO:0007669"/>
    <property type="project" value="UniProtKB-KW"/>
</dbReference>
<dbReference type="Gene3D" id="3.30.40.10">
    <property type="entry name" value="Zinc/RING finger domain, C3HC4 (zinc finger)"/>
    <property type="match status" value="1"/>
</dbReference>
<dbReference type="InterPro" id="IPR018957">
    <property type="entry name" value="Znf_C3HC4_RING-type"/>
</dbReference>
<dbReference type="InterPro" id="IPR001841">
    <property type="entry name" value="Znf_RING"/>
</dbReference>
<dbReference type="InterPro" id="IPR013083">
    <property type="entry name" value="Znf_RING/FYVE/PHD"/>
</dbReference>
<dbReference type="InterPro" id="IPR017907">
    <property type="entry name" value="Znf_RING_CS"/>
</dbReference>
<dbReference type="Pfam" id="PF00097">
    <property type="entry name" value="zf-C3HC4"/>
    <property type="match status" value="1"/>
</dbReference>
<dbReference type="SMART" id="SM00184">
    <property type="entry name" value="RING"/>
    <property type="match status" value="1"/>
</dbReference>
<dbReference type="SUPFAM" id="SSF57850">
    <property type="entry name" value="RING/U-box"/>
    <property type="match status" value="1"/>
</dbReference>
<dbReference type="PROSITE" id="PS00518">
    <property type="entry name" value="ZF_RING_1"/>
    <property type="match status" value="1"/>
</dbReference>
<dbReference type="PROSITE" id="PS50089">
    <property type="entry name" value="ZF_RING_2"/>
    <property type="match status" value="1"/>
</dbReference>